<dbReference type="EMBL" id="GU292927">
    <property type="protein sequence ID" value="ADB56743.1"/>
    <property type="molecule type" value="mRNA"/>
</dbReference>
<dbReference type="EMBL" id="GU293104">
    <property type="protein sequence ID" value="ADB56920.1"/>
    <property type="molecule type" value="Genomic_DNA"/>
</dbReference>
<dbReference type="SMR" id="D2Y250"/>
<dbReference type="ArachnoServer" id="AS001657">
    <property type="toxin name" value="U3-theraphotoxin-Hhn1a"/>
</dbReference>
<dbReference type="GO" id="GO:0005576">
    <property type="term" value="C:extracellular region"/>
    <property type="evidence" value="ECO:0007669"/>
    <property type="project" value="UniProtKB-SubCell"/>
</dbReference>
<dbReference type="GO" id="GO:0008200">
    <property type="term" value="F:ion channel inhibitor activity"/>
    <property type="evidence" value="ECO:0007669"/>
    <property type="project" value="InterPro"/>
</dbReference>
<dbReference type="GO" id="GO:0090729">
    <property type="term" value="F:toxin activity"/>
    <property type="evidence" value="ECO:0007669"/>
    <property type="project" value="UniProtKB-KW"/>
</dbReference>
<dbReference type="InterPro" id="IPR011696">
    <property type="entry name" value="Huwentoxin-1"/>
</dbReference>
<dbReference type="InterPro" id="IPR013140">
    <property type="entry name" value="Huwentoxin_CS1"/>
</dbReference>
<dbReference type="Pfam" id="PF07740">
    <property type="entry name" value="Toxin_12"/>
    <property type="match status" value="1"/>
</dbReference>
<dbReference type="SUPFAM" id="SSF57059">
    <property type="entry name" value="omega toxin-like"/>
    <property type="match status" value="1"/>
</dbReference>
<dbReference type="PROSITE" id="PS60021">
    <property type="entry name" value="HWTX_1"/>
    <property type="match status" value="1"/>
</dbReference>
<accession>D2Y250</accession>
<organism>
    <name type="scientific">Cyriopagopus hainanus</name>
    <name type="common">Chinese bird spider</name>
    <name type="synonym">Haplopelma hainanum</name>
    <dbReference type="NCBI Taxonomy" id="209901"/>
    <lineage>
        <taxon>Eukaryota</taxon>
        <taxon>Metazoa</taxon>
        <taxon>Ecdysozoa</taxon>
        <taxon>Arthropoda</taxon>
        <taxon>Chelicerata</taxon>
        <taxon>Arachnida</taxon>
        <taxon>Araneae</taxon>
        <taxon>Mygalomorphae</taxon>
        <taxon>Theraphosidae</taxon>
        <taxon>Haplopelma</taxon>
    </lineage>
</organism>
<proteinExistence type="evidence at protein level"/>
<protein>
    <recommendedName>
        <fullName>U3-theraphotoxin-Hhn1a 7</fullName>
        <shortName>U3-TRTX-Hhn1a</shortName>
    </recommendedName>
    <alternativeName>
        <fullName>Hainantoxin-VIII.7</fullName>
        <shortName>HNTX-VIII.7</shortName>
    </alternativeName>
    <alternativeName>
        <fullName>Peptide F4-27.90</fullName>
    </alternativeName>
</protein>
<feature type="signal peptide" evidence="3">
    <location>
        <begin position="1"/>
        <end position="24"/>
    </location>
</feature>
<feature type="propeptide" id="PRO_0000400591" evidence="4">
    <location>
        <begin position="25"/>
        <end position="52"/>
    </location>
</feature>
<feature type="peptide" id="PRO_0000400592" description="U3-theraphotoxin-Hhn1a 7">
    <location>
        <begin position="53"/>
        <end position="87"/>
    </location>
</feature>
<feature type="disulfide bond" evidence="2">
    <location>
        <begin position="54"/>
        <end position="67"/>
    </location>
</feature>
<feature type="disulfide bond" evidence="2">
    <location>
        <begin position="61"/>
        <end position="72"/>
    </location>
</feature>
<feature type="disulfide bond" evidence="2">
    <location>
        <begin position="66"/>
        <end position="79"/>
    </location>
</feature>
<evidence type="ECO:0000250" key="1"/>
<evidence type="ECO:0000250" key="2">
    <source>
        <dbReference type="UniProtKB" id="B3FIS6"/>
    </source>
</evidence>
<evidence type="ECO:0000255" key="3"/>
<evidence type="ECO:0000269" key="4">
    <source>
    </source>
</evidence>
<evidence type="ECO:0000305" key="5"/>
<keyword id="KW-0903">Direct protein sequencing</keyword>
<keyword id="KW-1015">Disulfide bond</keyword>
<keyword id="KW-0872">Ion channel impairing toxin</keyword>
<keyword id="KW-0960">Knottin</keyword>
<keyword id="KW-0964">Secreted</keyword>
<keyword id="KW-0732">Signal</keyword>
<keyword id="KW-0800">Toxin</keyword>
<reference key="1">
    <citation type="journal article" date="2010" name="J. Proteome Res.">
        <title>Molecular diversification of peptide toxins from the tarantula Haplopelma hainanum (Ornithoctonus hainana) venom based on transcriptomic, peptidomic, and genomic analyses.</title>
        <authorList>
            <person name="Tang X."/>
            <person name="Zhang Y."/>
            <person name="Hu W."/>
            <person name="Xu D."/>
            <person name="Tao H."/>
            <person name="Yang X."/>
            <person name="Li Y."/>
            <person name="Jiang L."/>
            <person name="Liang S."/>
        </authorList>
    </citation>
    <scope>NUCLEOTIDE SEQUENCE [LARGE SCALE GENOMIC DNA / MRNA]</scope>
    <scope>PROTEIN SEQUENCE OF 53-85</scope>
    <scope>IDENTIFICATION BY MASS SPECTROMETRY</scope>
    <source>
        <tissue>Venom</tissue>
        <tissue>Venom gland</tissue>
    </source>
</reference>
<sequence>MVNMKASMFLTFAGLVLLFVVSYASESEEKEFPKEMLSSIFAVDNDFKQEERDCAGYMRECKEKLCCSGYVCSSRWKWCVLPAPWRR</sequence>
<name>H8A07_CYRHA</name>
<comment type="function">
    <text evidence="1">Ion channel inhibitor.</text>
</comment>
<comment type="subcellular location">
    <subcellularLocation>
        <location>Secreted</location>
    </subcellularLocation>
</comment>
<comment type="tissue specificity">
    <text>Expressed by the venom gland.</text>
</comment>
<comment type="domain">
    <text evidence="1">The presence of a 'disulfide through disulfide knot' structurally defines this protein as a knottin.</text>
</comment>
<comment type="similarity">
    <text evidence="5">Belongs to the neurotoxin 10 (Hwtx-1) family. 51 (Hntx-8) subfamily. Hntx-8 sub-subfamily.</text>
</comment>